<organism>
    <name type="scientific">Hamiltonella defensa subsp. Acyrthosiphon pisum (strain 5AT)</name>
    <dbReference type="NCBI Taxonomy" id="572265"/>
    <lineage>
        <taxon>Bacteria</taxon>
        <taxon>Pseudomonadati</taxon>
        <taxon>Pseudomonadota</taxon>
        <taxon>Gammaproteobacteria</taxon>
        <taxon>Enterobacterales</taxon>
        <taxon>Enterobacteriaceae</taxon>
        <taxon>aphid secondary symbionts</taxon>
        <taxon>Candidatus Hamiltonella</taxon>
    </lineage>
</organism>
<keyword id="KW-0963">Cytoplasm</keyword>
<keyword id="KW-0238">DNA-binding</keyword>
<keyword id="KW-0804">Transcription</keyword>
<keyword id="KW-0805">Transcription regulation</keyword>
<dbReference type="EMBL" id="CP001277">
    <property type="protein sequence ID" value="ACQ67589.1"/>
    <property type="molecule type" value="Genomic_DNA"/>
</dbReference>
<dbReference type="RefSeq" id="WP_015873404.1">
    <property type="nucleotide sequence ID" value="NC_012751.1"/>
</dbReference>
<dbReference type="SMR" id="C4K4U6"/>
<dbReference type="STRING" id="572265.HDEF_0869"/>
<dbReference type="GeneID" id="66260702"/>
<dbReference type="KEGG" id="hde:HDEF_0869"/>
<dbReference type="eggNOG" id="COG0217">
    <property type="taxonomic scope" value="Bacteria"/>
</dbReference>
<dbReference type="HOGENOM" id="CLU_062974_2_2_6"/>
<dbReference type="Proteomes" id="UP000002334">
    <property type="component" value="Chromosome"/>
</dbReference>
<dbReference type="GO" id="GO:0005829">
    <property type="term" value="C:cytosol"/>
    <property type="evidence" value="ECO:0007669"/>
    <property type="project" value="TreeGrafter"/>
</dbReference>
<dbReference type="GO" id="GO:0003677">
    <property type="term" value="F:DNA binding"/>
    <property type="evidence" value="ECO:0007669"/>
    <property type="project" value="UniProtKB-UniRule"/>
</dbReference>
<dbReference type="GO" id="GO:0006355">
    <property type="term" value="P:regulation of DNA-templated transcription"/>
    <property type="evidence" value="ECO:0007669"/>
    <property type="project" value="UniProtKB-UniRule"/>
</dbReference>
<dbReference type="FunFam" id="1.10.10.200:FF:000001">
    <property type="entry name" value="Probable transcriptional regulatory protein YebC"/>
    <property type="match status" value="1"/>
</dbReference>
<dbReference type="FunFam" id="3.30.70.980:FF:000002">
    <property type="entry name" value="Probable transcriptional regulatory protein YebC"/>
    <property type="match status" value="1"/>
</dbReference>
<dbReference type="Gene3D" id="1.10.10.200">
    <property type="match status" value="1"/>
</dbReference>
<dbReference type="Gene3D" id="3.30.70.980">
    <property type="match status" value="2"/>
</dbReference>
<dbReference type="HAMAP" id="MF_00693">
    <property type="entry name" value="Transcrip_reg_TACO1"/>
    <property type="match status" value="1"/>
</dbReference>
<dbReference type="InterPro" id="IPR017856">
    <property type="entry name" value="Integrase-like_N"/>
</dbReference>
<dbReference type="InterPro" id="IPR048300">
    <property type="entry name" value="TACO1_YebC-like_2nd/3rd_dom"/>
</dbReference>
<dbReference type="InterPro" id="IPR049083">
    <property type="entry name" value="TACO1_YebC_N"/>
</dbReference>
<dbReference type="InterPro" id="IPR002876">
    <property type="entry name" value="Transcrip_reg_TACO1-like"/>
</dbReference>
<dbReference type="InterPro" id="IPR026564">
    <property type="entry name" value="Transcrip_reg_TACO1-like_dom3"/>
</dbReference>
<dbReference type="InterPro" id="IPR029072">
    <property type="entry name" value="YebC-like"/>
</dbReference>
<dbReference type="NCBIfam" id="NF001030">
    <property type="entry name" value="PRK00110.1"/>
    <property type="match status" value="1"/>
</dbReference>
<dbReference type="NCBIfam" id="NF009044">
    <property type="entry name" value="PRK12378.1"/>
    <property type="match status" value="1"/>
</dbReference>
<dbReference type="NCBIfam" id="TIGR01033">
    <property type="entry name" value="YebC/PmpR family DNA-binding transcriptional regulator"/>
    <property type="match status" value="1"/>
</dbReference>
<dbReference type="PANTHER" id="PTHR12532:SF6">
    <property type="entry name" value="TRANSCRIPTIONAL REGULATORY PROTEIN YEBC-RELATED"/>
    <property type="match status" value="1"/>
</dbReference>
<dbReference type="PANTHER" id="PTHR12532">
    <property type="entry name" value="TRANSLATIONAL ACTIVATOR OF CYTOCHROME C OXIDASE 1"/>
    <property type="match status" value="1"/>
</dbReference>
<dbReference type="Pfam" id="PF20772">
    <property type="entry name" value="TACO1_YebC_N"/>
    <property type="match status" value="1"/>
</dbReference>
<dbReference type="Pfam" id="PF01709">
    <property type="entry name" value="Transcrip_reg"/>
    <property type="match status" value="1"/>
</dbReference>
<dbReference type="SUPFAM" id="SSF75625">
    <property type="entry name" value="YebC-like"/>
    <property type="match status" value="1"/>
</dbReference>
<protein>
    <recommendedName>
        <fullName evidence="1">Probable transcriptional regulatory protein HDEF_0869</fullName>
    </recommendedName>
</protein>
<gene>
    <name type="ordered locus">HDEF_0869</name>
</gene>
<name>Y869_HAMD5</name>
<evidence type="ECO:0000255" key="1">
    <source>
        <dbReference type="HAMAP-Rule" id="MF_00693"/>
    </source>
</evidence>
<evidence type="ECO:0000256" key="2">
    <source>
        <dbReference type="SAM" id="MobiDB-lite"/>
    </source>
</evidence>
<accession>C4K4U6</accession>
<reference key="1">
    <citation type="journal article" date="2009" name="Proc. Natl. Acad. Sci. U.S.A.">
        <title>Hamiltonella defensa, genome evolution of protective bacterial endosymbiont from pathogenic ancestors.</title>
        <authorList>
            <person name="Degnan P.H."/>
            <person name="Yu Y."/>
            <person name="Sisneros N."/>
            <person name="Wing R.A."/>
            <person name="Moran N.A."/>
        </authorList>
    </citation>
    <scope>NUCLEOTIDE SEQUENCE [LARGE SCALE GENOMIC DNA]</scope>
    <source>
        <strain>5AT</strain>
    </source>
</reference>
<proteinExistence type="inferred from homology"/>
<sequence length="254" mass="27628">MAGHSKWANTKHRKAAQDAKKGKIFTKIIRELVTSARLGGGDPASNPRLRTAIDKALSHNMTRDTLNRAIARGIGGGEDSHMENILYEGYGPAGTAVMVSCLSDNRNRTVSEVRHAFTKTGGNLGTGGSVSYLFTKKGVFSYAPGLNEDQVMELALESGADDIMVYDDGAIDIFSSPEFFETIKKTLETAGLMASTAEISMIPSTKIDLNLENAQRLLRLIDMLEDSDDVQEVYHNGDFSDEISAALFFKNTKP</sequence>
<comment type="subcellular location">
    <subcellularLocation>
        <location evidence="1">Cytoplasm</location>
    </subcellularLocation>
</comment>
<comment type="similarity">
    <text evidence="1">Belongs to the TACO1 family.</text>
</comment>
<feature type="chain" id="PRO_1000212614" description="Probable transcriptional regulatory protein HDEF_0869">
    <location>
        <begin position="1"/>
        <end position="254"/>
    </location>
</feature>
<feature type="region of interest" description="Disordered" evidence="2">
    <location>
        <begin position="1"/>
        <end position="20"/>
    </location>
</feature>